<feature type="chain" id="PRO_0000203151" description="SWI5-dependent HO expression protein 2">
    <location>
        <begin position="1"/>
        <end position="246"/>
    </location>
</feature>
<feature type="short sequence motif" description="Nuclear localization signal">
    <location>
        <begin position="15"/>
        <end position="23"/>
    </location>
</feature>
<feature type="mutagenesis site" description="Prevents association with ASH1 and IST2 mRNAs and leads to their mislocalization." evidence="8">
    <original>N</original>
    <variation>S</variation>
    <location>
        <position position="36"/>
    </location>
</feature>
<feature type="mutagenesis site" description="Prevents association with ASH1 and mRNA and leads to its mislocalization." evidence="8">
    <original>R</original>
    <variation>A</variation>
    <location>
        <position position="43"/>
    </location>
</feature>
<feature type="mutagenesis site" description="Prevents association with ASH1 and mRNA and leads to its mislocalization." evidence="8">
    <original>R</original>
    <variation>A</variation>
    <location>
        <position position="44"/>
    </location>
</feature>
<feature type="mutagenesis site" description="Prevents association with ASH1 and mRNA and leads to its mislocalization." evidence="8">
    <original>R</original>
    <variation>K</variation>
    <location>
        <position position="49"/>
    </location>
</feature>
<feature type="mutagenesis site" description="Prevents association with ASH1 and mRNA and leads to its mislocalization." evidence="8">
    <original>R</original>
    <variation>A</variation>
    <variation>K</variation>
    <location>
        <position position="52"/>
    </location>
</feature>
<feature type="mutagenesis site" description="Prevents association with ASH1 and IST2 mRNAs and leads to their mislocalization." evidence="8">
    <original>R</original>
    <variation>A</variation>
    <variation>K</variation>
    <location>
        <position position="63"/>
    </location>
</feature>
<feature type="mutagenesis site" description="Prevents dimerization and RNA-binding." evidence="12">
    <original>C</original>
    <variation>Y</variation>
    <location>
        <position position="68"/>
    </location>
</feature>
<feature type="mutagenesis site" description="Prevents dimerization and RNA-binding." evidence="12">
    <original>S</original>
    <variation>Y</variation>
    <location>
        <position position="120"/>
    </location>
</feature>
<feature type="mutagenesis site" description="Prevents tetramerization." evidence="17">
    <original>L</original>
    <variation>Y</variation>
    <location>
        <position position="130"/>
    </location>
</feature>
<feature type="helix" evidence="21">
    <location>
        <begin position="13"/>
        <end position="42"/>
    </location>
</feature>
<feature type="helix" evidence="21">
    <location>
        <begin position="46"/>
        <end position="48"/>
    </location>
</feature>
<feature type="helix" evidence="21">
    <location>
        <begin position="49"/>
        <end position="71"/>
    </location>
</feature>
<feature type="helix" evidence="21">
    <location>
        <begin position="74"/>
        <end position="77"/>
    </location>
</feature>
<feature type="strand" evidence="23">
    <location>
        <begin position="82"/>
        <end position="84"/>
    </location>
</feature>
<feature type="turn" evidence="21">
    <location>
        <begin position="86"/>
        <end position="88"/>
    </location>
</feature>
<feature type="helix" evidence="21">
    <location>
        <begin position="92"/>
        <end position="118"/>
    </location>
</feature>
<feature type="helix" evidence="21">
    <location>
        <begin position="120"/>
        <end position="129"/>
    </location>
</feature>
<feature type="helix" evidence="21">
    <location>
        <begin position="132"/>
        <end position="134"/>
    </location>
</feature>
<feature type="helix" evidence="21">
    <location>
        <begin position="138"/>
        <end position="161"/>
    </location>
</feature>
<feature type="helix" evidence="21">
    <location>
        <begin position="167"/>
        <end position="169"/>
    </location>
</feature>
<feature type="helix" evidence="21">
    <location>
        <begin position="172"/>
        <end position="179"/>
    </location>
</feature>
<feature type="strand" evidence="24">
    <location>
        <begin position="187"/>
        <end position="189"/>
    </location>
</feature>
<feature type="helix" evidence="23">
    <location>
        <begin position="194"/>
        <end position="196"/>
    </location>
</feature>
<feature type="strand" evidence="22">
    <location>
        <begin position="197"/>
        <end position="199"/>
    </location>
</feature>
<feature type="helix" evidence="21">
    <location>
        <begin position="205"/>
        <end position="235"/>
    </location>
</feature>
<reference key="1">
    <citation type="journal article" date="1994" name="Nature">
        <title>Complete DNA sequence of yeast chromosome XI.</title>
        <authorList>
            <person name="Dujon B."/>
            <person name="Alexandraki D."/>
            <person name="Andre B."/>
            <person name="Ansorge W."/>
            <person name="Baladron V."/>
            <person name="Ballesta J.P.G."/>
            <person name="Banrevi A."/>
            <person name="Bolle P.-A."/>
            <person name="Bolotin-Fukuhara M."/>
            <person name="Bossier P."/>
            <person name="Bou G."/>
            <person name="Boyer J."/>
            <person name="Buitrago M.J."/>
            <person name="Cheret G."/>
            <person name="Colleaux L."/>
            <person name="Daignan-Fornier B."/>
            <person name="del Rey F."/>
            <person name="Dion C."/>
            <person name="Domdey H."/>
            <person name="Duesterhoeft A."/>
            <person name="Duesterhus S."/>
            <person name="Entian K.-D."/>
            <person name="Erfle H."/>
            <person name="Esteban P.F."/>
            <person name="Feldmann H."/>
            <person name="Fernandes L."/>
            <person name="Fobo G.M."/>
            <person name="Fritz C."/>
            <person name="Fukuhara H."/>
            <person name="Gabel C."/>
            <person name="Gaillon L."/>
            <person name="Garcia-Cantalejo J.M."/>
            <person name="Garcia-Ramirez J.J."/>
            <person name="Gent M.E."/>
            <person name="Ghazvini M."/>
            <person name="Goffeau A."/>
            <person name="Gonzalez A."/>
            <person name="Grothues D."/>
            <person name="Guerreiro P."/>
            <person name="Hegemann J.H."/>
            <person name="Hewitt N."/>
            <person name="Hilger F."/>
            <person name="Hollenberg C.P."/>
            <person name="Horaitis O."/>
            <person name="Indge K.J."/>
            <person name="Jacquier A."/>
            <person name="James C.M."/>
            <person name="Jauniaux J.-C."/>
            <person name="Jimenez A."/>
            <person name="Keuchel H."/>
            <person name="Kirchrath L."/>
            <person name="Kleine K."/>
            <person name="Koetter P."/>
            <person name="Legrain P."/>
            <person name="Liebl S."/>
            <person name="Louis E.J."/>
            <person name="Maia e Silva A."/>
            <person name="Marck C."/>
            <person name="Monnier A.-L."/>
            <person name="Moestl D."/>
            <person name="Mueller S."/>
            <person name="Obermaier B."/>
            <person name="Oliver S.G."/>
            <person name="Pallier C."/>
            <person name="Pascolo S."/>
            <person name="Pfeiffer F."/>
            <person name="Philippsen P."/>
            <person name="Planta R.J."/>
            <person name="Pohl F.M."/>
            <person name="Pohl T.M."/>
            <person name="Poehlmann R."/>
            <person name="Portetelle D."/>
            <person name="Purnelle B."/>
            <person name="Puzos V."/>
            <person name="Ramezani Rad M."/>
            <person name="Rasmussen S.W."/>
            <person name="Remacha M.A."/>
            <person name="Revuelta J.L."/>
            <person name="Richard G.-F."/>
            <person name="Rieger M."/>
            <person name="Rodrigues-Pousada C."/>
            <person name="Rose M."/>
            <person name="Rupp T."/>
            <person name="Santos M.A."/>
            <person name="Schwager C."/>
            <person name="Sensen C."/>
            <person name="Skala J."/>
            <person name="Soares H."/>
            <person name="Sor F."/>
            <person name="Stegemann J."/>
            <person name="Tettelin H."/>
            <person name="Thierry A."/>
            <person name="Tzermia M."/>
            <person name="Urrestarazu L.A."/>
            <person name="van Dyck L."/>
            <person name="van Vliet-Reedijk J.C."/>
            <person name="Valens M."/>
            <person name="Vandenbol M."/>
            <person name="Vilela C."/>
            <person name="Vissers S."/>
            <person name="von Wettstein D."/>
            <person name="Voss H."/>
            <person name="Wiemann S."/>
            <person name="Xu G."/>
            <person name="Zimmermann J."/>
            <person name="Haasemann M."/>
            <person name="Becker I."/>
            <person name="Mewes H.-W."/>
        </authorList>
    </citation>
    <scope>NUCLEOTIDE SEQUENCE [LARGE SCALE GENOMIC DNA]</scope>
    <source>
        <strain>ATCC 204508 / S288c</strain>
    </source>
</reference>
<reference key="2">
    <citation type="journal article" date="2014" name="G3 (Bethesda)">
        <title>The reference genome sequence of Saccharomyces cerevisiae: Then and now.</title>
        <authorList>
            <person name="Engel S.R."/>
            <person name="Dietrich F.S."/>
            <person name="Fisk D.G."/>
            <person name="Binkley G."/>
            <person name="Balakrishnan R."/>
            <person name="Costanzo M.C."/>
            <person name="Dwight S.S."/>
            <person name="Hitz B.C."/>
            <person name="Karra K."/>
            <person name="Nash R.S."/>
            <person name="Weng S."/>
            <person name="Wong E.D."/>
            <person name="Lloyd P."/>
            <person name="Skrzypek M.S."/>
            <person name="Miyasato S.R."/>
            <person name="Simison M."/>
            <person name="Cherry J.M."/>
        </authorList>
    </citation>
    <scope>GENOME REANNOTATION</scope>
    <source>
        <strain>ATCC 204508 / S288c</strain>
    </source>
</reference>
<reference key="3">
    <citation type="journal article" date="2007" name="Genome Res.">
        <title>Approaching a complete repository of sequence-verified protein-encoding clones for Saccharomyces cerevisiae.</title>
        <authorList>
            <person name="Hu Y."/>
            <person name="Rolfs A."/>
            <person name="Bhullar B."/>
            <person name="Murthy T.V.S."/>
            <person name="Zhu C."/>
            <person name="Berger M.F."/>
            <person name="Camargo A.A."/>
            <person name="Kelley F."/>
            <person name="McCarron S."/>
            <person name="Jepson D."/>
            <person name="Richardson A."/>
            <person name="Raphael J."/>
            <person name="Moreira D."/>
            <person name="Taycher E."/>
            <person name="Zuo D."/>
            <person name="Mohr S."/>
            <person name="Kane M.F."/>
            <person name="Williamson J."/>
            <person name="Simpson A.J.G."/>
            <person name="Bulyk M.L."/>
            <person name="Harlow E."/>
            <person name="Marsischky G."/>
            <person name="Kolodner R.D."/>
            <person name="LaBaer J."/>
        </authorList>
    </citation>
    <scope>NUCLEOTIDE SEQUENCE [GENOMIC DNA]</scope>
    <source>
        <strain>ATCC 204508 / S288c</strain>
    </source>
</reference>
<reference key="4">
    <citation type="journal article" date="1998" name="Mol. Cell">
        <title>Localization of ASH1 mRNA particles in living yeast.</title>
        <authorList>
            <person name="Bertrand E."/>
            <person name="Chartrand P."/>
            <person name="Schaefer M."/>
            <person name="Shenoy S.M."/>
            <person name="Singer R.H."/>
            <person name="Long R.M."/>
        </authorList>
    </citation>
    <scope>FUNCTION</scope>
</reference>
<reference key="5">
    <citation type="journal article" date="1999" name="Curr. Biol.">
        <title>Localization and anchoring of mRNA in budding yeast.</title>
        <authorList>
            <person name="Beach D.L."/>
            <person name="Salmon E.D."/>
            <person name="Bloom K."/>
        </authorList>
    </citation>
    <scope>FUNCTION</scope>
</reference>
<reference key="6">
    <citation type="journal article" date="1999" name="J. Cell Sci.">
        <title>Association of the class V myosin Myo4p with a localised messenger RNA in budding yeast depends on She proteins.</title>
        <authorList>
            <person name="Munchow S."/>
            <person name="Sauter C."/>
            <person name="Jansen R.P."/>
        </authorList>
    </citation>
    <scope>FUNCTION</scope>
</reference>
<reference key="7">
    <citation type="journal article" date="2000" name="EMBO J.">
        <title>She2p, a novel RNA-binding protein tethers ASH1 mRNA to the Myo4p myosin motor via She3p.</title>
        <authorList>
            <person name="Bohl F."/>
            <person name="Kruse C."/>
            <person name="Frank A."/>
            <person name="Ferring D."/>
            <person name="Jansen R.P."/>
        </authorList>
    </citation>
    <scope>FUNCTION</scope>
    <scope>RNA-BINDING</scope>
    <scope>INTERACTION WITH SHE3 AND MYO4</scope>
</reference>
<reference key="8">
    <citation type="journal article" date="2000" name="EMBO J.">
        <title>She2p is a novel RNA-binding protein that recruits the Myo4p-She3p complex to ASH1 mRNA.</title>
        <authorList>
            <person name="Long R.M."/>
            <person name="Gu W."/>
            <person name="Lorimer E."/>
            <person name="Singer R.H."/>
            <person name="Chartrand P."/>
        </authorList>
    </citation>
    <scope>FUNCTION</scope>
    <scope>RNA-BINDING</scope>
    <scope>INTERACTION WITH SHE3</scope>
</reference>
<reference key="9">
    <citation type="journal article" date="2000" name="Proc. Natl. Acad. Sci. U.S.A.">
        <title>The myosin motor, Myo4p, binds Ash1 mRNA via the adapter protein, She3p.</title>
        <authorList>
            <person name="Takizawa P.A."/>
            <person name="Vale R.D."/>
        </authorList>
    </citation>
    <scope>RNA-BINDING</scope>
    <scope>INTERACTION WITH MYO4</scope>
</reference>
<reference key="10">
    <citation type="journal article" date="2002" name="J. Cell Biol.">
        <title>Ribonucleoprotein-dependent localization of the yeast class V myosin Myo4p.</title>
        <authorList>
            <person name="Kruse C."/>
            <person name="Jaedicke A."/>
            <person name="Beaudouin J."/>
            <person name="Bohl F."/>
            <person name="Ferring D."/>
            <person name="Guttler T."/>
            <person name="Ellenberg J."/>
            <person name="Jansen R.P."/>
        </authorList>
    </citation>
    <scope>FUNCTION</scope>
    <scope>SUBCELLULAR LOCATION</scope>
</reference>
<reference key="11">
    <citation type="journal article" date="2003" name="J. Cell Biol.">
        <title>Myo4p and She3p are required for cortical ER inheritance in Saccharomyces cerevisiae.</title>
        <authorList>
            <person name="Estrada P."/>
            <person name="Kim J."/>
            <person name="Coleman J."/>
            <person name="Walker L."/>
            <person name="Dunn B."/>
            <person name="Takizawa P."/>
            <person name="Novick P."/>
            <person name="Ferro-Novick S."/>
        </authorList>
    </citation>
    <scope>FUNCTION</scope>
</reference>
<reference key="12">
    <citation type="journal article" date="2003" name="Nature">
        <title>Global analysis of protein expression in yeast.</title>
        <authorList>
            <person name="Ghaemmaghami S."/>
            <person name="Huh W.-K."/>
            <person name="Bower K."/>
            <person name="Howson R.W."/>
            <person name="Belle A."/>
            <person name="Dephoure N."/>
            <person name="O'Shea E.K."/>
            <person name="Weissman J.S."/>
        </authorList>
    </citation>
    <scope>LEVEL OF PROTEIN EXPRESSION [LARGE SCALE ANALYSIS]</scope>
</reference>
<reference key="13">
    <citation type="journal article" date="2003" name="Proc. Natl. Acad. Sci. U.S.A.">
        <title>Widespread cytoplasmic mRNA transport in yeast: identification of 22 bud-localized transcripts using DNA microarray analysis.</title>
        <authorList>
            <person name="Shepard K.A."/>
            <person name="Gerber A.P."/>
            <person name="Jambhekar A."/>
            <person name="Takizawa P.A."/>
            <person name="Brown P.O."/>
            <person name="Herschlag D."/>
            <person name="DeRisi J.L."/>
            <person name="Vale R.D."/>
        </authorList>
    </citation>
    <scope>FUNCTION</scope>
</reference>
<reference key="14">
    <citation type="journal article" date="2003" name="RNA">
        <title>RNA-protein interactions promote asymmetric sorting of the ASH1 mRNA ribonucleoprotein complex.</title>
        <authorList>
            <person name="Gonsalvez G.B."/>
            <person name="Lehmann K.A."/>
            <person name="Ho D.K."/>
            <person name="Stanitsa E.S."/>
            <person name="Williamson J.R."/>
            <person name="Long R.M."/>
        </authorList>
    </citation>
    <scope>FUNCTION</scope>
    <scope>SUBCELLULAR LOCATION</scope>
    <scope>RNA-BINDING</scope>
    <scope>INTERACTION WITH SHE3</scope>
    <scope>MUTAGENESIS OF ASN-36; ARG-43; ARG-44; ARG-49; ARG-52 AND ARG-63</scope>
</reference>
<reference key="15">
    <citation type="journal article" date="2004" name="J. Biol. Chem.">
        <title>ASH1 mRNA anchoring requires reorganization of the Myo4p-She3p-She2p transport complex.</title>
        <authorList>
            <person name="Gonsalvez G.B."/>
            <person name="Little J.L."/>
            <person name="Long R.M."/>
        </authorList>
    </citation>
    <scope>FUNCTION</scope>
</reference>
<reference key="16">
    <citation type="journal article" date="2005" name="Mol. Cell. Biol.">
        <title>Identification of a conserved RNA motif essential for She2p recognition and mRNA localization to the yeast bud.</title>
        <authorList>
            <person name="Olivier C."/>
            <person name="Poirier G."/>
            <person name="Gendron P."/>
            <person name="Boisgontier A."/>
            <person name="Major F."/>
            <person name="Chartrand P."/>
        </authorList>
    </citation>
    <scope>FUNCTION</scope>
    <scope>RNA-BINDING</scope>
</reference>
<reference key="17">
    <citation type="journal article" date="2006" name="Curr. Biol.">
        <title>Coordination of endoplasmic reticulum and mRNA localization to the yeast bud.</title>
        <authorList>
            <person name="Schmid M."/>
            <person name="Jaedicke A."/>
            <person name="Du T.G."/>
            <person name="Jansen R.P."/>
        </authorList>
    </citation>
    <scope>FUNCTION</scope>
    <scope>SUBCELLULAR LOCATION</scope>
</reference>
<reference key="18">
    <citation type="journal article" date="2008" name="EMBO Rep.">
        <title>Nuclear transit of the RNA-binding protein She2 is required for translational control of localized ASH1 mRNA.</title>
        <authorList>
            <person name="Du T.G."/>
            <person name="Jellbauer S."/>
            <person name="Muller M."/>
            <person name="Schmid M."/>
            <person name="Niessing D."/>
            <person name="Jansen R.P."/>
        </authorList>
    </citation>
    <scope>FUNCTION</scope>
    <scope>SUBCELLULAR LOCATION</scope>
</reference>
<reference key="19">
    <citation type="journal article" date="2009" name="Mol. Biol. Cell">
        <title>Nuclear shuttling of She2p couples ASH1 mRNA localization to its translational repression by recruiting Loc1p and Puf6p.</title>
        <authorList>
            <person name="Shen Z."/>
            <person name="Paquin N."/>
            <person name="Forget A."/>
            <person name="Chartrand P."/>
        </authorList>
    </citation>
    <scope>FUNCTION</scope>
    <scope>INTERACTION WITH LOC1; PUF6 AND SRP1</scope>
    <scope>NUCLEUS LOCALIZATION SIGNAL</scope>
    <scope>SUBCELLULAR LOCATION</scope>
</reference>
<reference key="20">
    <citation type="journal article" date="2009" name="RNA">
        <title>Formation of She2p tetramers is required for mRNA binding, mRNP assembly, and localization.</title>
        <authorList>
            <person name="Muller M."/>
            <person name="Richter K."/>
            <person name="Heuck A."/>
            <person name="Kremmer E."/>
            <person name="Buchner J."/>
            <person name="Jansen R.P."/>
            <person name="Niessing D."/>
        </authorList>
    </citation>
    <scope>SUBUNIT</scope>
    <scope>MUTAGENESIS OF LEU-130</scope>
</reference>
<reference key="21">
    <citation type="journal article" date="2010" name="Genes Dev.">
        <title>Cotranscriptional recruitment of She2p by RNA pol II elongation factor Spt4-Spt5/DSIF promotes mRNA localization to the yeast bud.</title>
        <authorList>
            <person name="Shen Z."/>
            <person name="St-Denis A."/>
            <person name="Chartrand P."/>
        </authorList>
    </citation>
    <scope>FUNCTION</scope>
    <scope>INTERACTION WITH RPO21; SPT4 AND SPT5</scope>
</reference>
<reference key="22">
    <citation type="journal article" date="2004" name="Cell">
        <title>She2p is a novel RNA binding protein with a basic helical hairpin motif.</title>
        <authorList>
            <person name="Niessing D."/>
            <person name="Huttelmaier S."/>
            <person name="Zenklusen D."/>
            <person name="Singer R.H."/>
            <person name="Burley S.K."/>
        </authorList>
    </citation>
    <scope>X-RAY CRYSTALLOGRAPHY (1.95 ANGSTROMS) OF 6-239</scope>
    <scope>SUBUNIT</scope>
    <scope>FUNCTION</scope>
    <scope>RNA-BINDING</scope>
    <scope>MUTAGENESIS OF CYS-68 AND SER-120</scope>
</reference>
<comment type="function">
    <text evidence="1 2 4 5 6 7 8 10 11 12 13 14 15 16 18 19">RNA-binding protein that binds specific mRNAs including the ASH1 mRNA, coding for a repressor of the HO endonuclease. Part of the mRNA localization machinery that restricts accumulation of certain proteins to the bud and in the daughter cell. Recruits the MYO4-SHE3 complex to the ASH1 mRNA. Also recruits LOC1 and PUF6 to ASH1 mRNA, which are required for translational repression of this mRNA.</text>
</comment>
<comment type="subunit">
    <text evidence="3 4 5 8 12 16 17 18">Homodimer and homotetramer. Interacts with LOC1, MYO4, PUF6, SHE3 and with RNA pol II subunits RPO21, SPT4 and SPT5.</text>
</comment>
<comment type="interaction">
    <interactant intactId="EBI-26866">
        <id>P36068</id>
    </interactant>
    <interactant intactId="EBI-11681">
        <id>P32492</id>
        <label>MYO4</label>
    </interactant>
    <organismsDiffer>false</organismsDiffer>
    <experiments>4</experiments>
</comment>
<comment type="interaction">
    <interactant intactId="EBI-26866">
        <id>P36068</id>
    </interactant>
    <interactant intactId="EBI-33208">
        <id>Q04373</id>
        <label>PUF6</label>
    </interactant>
    <organismsDiffer>false</organismsDiffer>
    <experiments>2</experiments>
</comment>
<comment type="interaction">
    <interactant intactId="EBI-26866">
        <id>P36068</id>
    </interactant>
    <interactant intactId="EBI-21600">
        <id>P38272</id>
        <label>SHE3</label>
    </interactant>
    <organismsDiffer>false</organismsDiffer>
    <experiments>12</experiments>
</comment>
<comment type="subcellular location">
    <subcellularLocation>
        <location evidence="6 8 15">Cytoplasm</location>
    </subcellularLocation>
    <subcellularLocation>
        <location evidence="6 8 15 16">Nucleus</location>
    </subcellularLocation>
    <text evidence="6 8 16">Shuttles between the nucleus and cytoplasm and is exported in an mRNA-dependent manner (PubMed:12499354, PubMed:14561888, PubMed:18566598). The presence in the nucleus is essential for PUF6 and LOC1 to bind the ASH1 mRNA.</text>
</comment>
<comment type="miscellaneous">
    <text evidence="9">Present with 4070 molecules/cell in log phase SD medium.</text>
</comment>
<comment type="similarity">
    <text evidence="20">Belongs to the SHE2 family.</text>
</comment>
<proteinExistence type="evidence at protein level"/>
<dbReference type="EMBL" id="Z28130">
    <property type="protein sequence ID" value="CAA81971.1"/>
    <property type="molecule type" value="Genomic_DNA"/>
</dbReference>
<dbReference type="EMBL" id="AY557902">
    <property type="protein sequence ID" value="AAS56228.1"/>
    <property type="molecule type" value="Genomic_DNA"/>
</dbReference>
<dbReference type="EMBL" id="BK006944">
    <property type="protein sequence ID" value="DAA09031.1"/>
    <property type="molecule type" value="Genomic_DNA"/>
</dbReference>
<dbReference type="PIR" id="S37959">
    <property type="entry name" value="S37959"/>
</dbReference>
<dbReference type="RefSeq" id="NP_012792.1">
    <property type="nucleotide sequence ID" value="NM_001179696.1"/>
</dbReference>
<dbReference type="PDB" id="1XLY">
    <property type="method" value="X-ray"/>
    <property type="resolution" value="1.95 A"/>
    <property type="chains" value="A/B=6-239"/>
</dbReference>
<dbReference type="PDB" id="4WNL">
    <property type="method" value="X-ray"/>
    <property type="resolution" value="2.80 A"/>
    <property type="chains" value="A/B/C/D=6-239"/>
</dbReference>
<dbReference type="PDB" id="5M0I">
    <property type="method" value="X-ray"/>
    <property type="resolution" value="2.41 A"/>
    <property type="chains" value="A/B/C/D=6-246"/>
</dbReference>
<dbReference type="PDB" id="5M0J">
    <property type="method" value="X-ray"/>
    <property type="resolution" value="2.80 A"/>
    <property type="chains" value="A/B/C/D/G/H/I/J=6-246"/>
</dbReference>
<dbReference type="PDBsum" id="1XLY"/>
<dbReference type="PDBsum" id="4WNL"/>
<dbReference type="PDBsum" id="5M0I"/>
<dbReference type="PDBsum" id="5M0J"/>
<dbReference type="SMR" id="P36068"/>
<dbReference type="BioGRID" id="34005">
    <property type="interactions" value="114"/>
</dbReference>
<dbReference type="DIP" id="DIP-1206N"/>
<dbReference type="FunCoup" id="P36068">
    <property type="interactions" value="137"/>
</dbReference>
<dbReference type="IntAct" id="P36068">
    <property type="interactions" value="26"/>
</dbReference>
<dbReference type="MINT" id="P36068"/>
<dbReference type="STRING" id="4932.YKL130C"/>
<dbReference type="iPTMnet" id="P36068"/>
<dbReference type="PaxDb" id="4932-YKL130C"/>
<dbReference type="PeptideAtlas" id="P36068"/>
<dbReference type="EnsemblFungi" id="YKL130C_mRNA">
    <property type="protein sequence ID" value="YKL130C"/>
    <property type="gene ID" value="YKL130C"/>
</dbReference>
<dbReference type="GeneID" id="853728"/>
<dbReference type="KEGG" id="sce:YKL130C"/>
<dbReference type="AGR" id="SGD:S000001613"/>
<dbReference type="SGD" id="S000001613">
    <property type="gene designation" value="SHE2"/>
</dbReference>
<dbReference type="VEuPathDB" id="FungiDB:YKL130C"/>
<dbReference type="eggNOG" id="ENOG502RXWH">
    <property type="taxonomic scope" value="Eukaryota"/>
</dbReference>
<dbReference type="HOGENOM" id="CLU_1129832_0_0_1"/>
<dbReference type="InParanoid" id="P36068"/>
<dbReference type="OMA" id="HFVKFTQ"/>
<dbReference type="OrthoDB" id="4041888at2759"/>
<dbReference type="BioCyc" id="YEAST:G3O-31911-MONOMER"/>
<dbReference type="BioGRID-ORCS" id="853728">
    <property type="hits" value="2 hits in 10 CRISPR screens"/>
</dbReference>
<dbReference type="EvolutionaryTrace" id="P36068"/>
<dbReference type="PRO" id="PR:P36068"/>
<dbReference type="Proteomes" id="UP000002311">
    <property type="component" value="Chromosome XI"/>
</dbReference>
<dbReference type="RNAct" id="P36068">
    <property type="molecule type" value="protein"/>
</dbReference>
<dbReference type="GO" id="GO:0005934">
    <property type="term" value="C:cellular bud tip"/>
    <property type="evidence" value="ECO:0000314"/>
    <property type="project" value="SGD"/>
</dbReference>
<dbReference type="GO" id="GO:0005737">
    <property type="term" value="C:cytoplasm"/>
    <property type="evidence" value="ECO:0000314"/>
    <property type="project" value="SGD"/>
</dbReference>
<dbReference type="GO" id="GO:0005829">
    <property type="term" value="C:cytosol"/>
    <property type="evidence" value="ECO:0007005"/>
    <property type="project" value="SGD"/>
</dbReference>
<dbReference type="GO" id="GO:0005634">
    <property type="term" value="C:nucleus"/>
    <property type="evidence" value="ECO:0007669"/>
    <property type="project" value="UniProtKB-SubCell"/>
</dbReference>
<dbReference type="GO" id="GO:0008289">
    <property type="term" value="F:lipid binding"/>
    <property type="evidence" value="ECO:0000314"/>
    <property type="project" value="SGD"/>
</dbReference>
<dbReference type="GO" id="GO:0003729">
    <property type="term" value="F:mRNA binding"/>
    <property type="evidence" value="ECO:0000314"/>
    <property type="project" value="SGD"/>
</dbReference>
<dbReference type="GO" id="GO:1990825">
    <property type="term" value="F:sequence-specific mRNA binding"/>
    <property type="evidence" value="ECO:0000314"/>
    <property type="project" value="SGD"/>
</dbReference>
<dbReference type="GO" id="GO:0008298">
    <property type="term" value="P:intracellular mRNA localization"/>
    <property type="evidence" value="ECO:0000314"/>
    <property type="project" value="SGD"/>
</dbReference>
<dbReference type="GO" id="GO:0007533">
    <property type="term" value="P:mating type switching"/>
    <property type="evidence" value="ECO:0000315"/>
    <property type="project" value="SGD"/>
</dbReference>
<dbReference type="GO" id="GO:0051028">
    <property type="term" value="P:mRNA transport"/>
    <property type="evidence" value="ECO:0007669"/>
    <property type="project" value="UniProtKB-KW"/>
</dbReference>
<dbReference type="FunFam" id="1.20.200.20:FF:000001">
    <property type="entry name" value="SWI5-dependent HO expression protein 2"/>
    <property type="match status" value="1"/>
</dbReference>
<dbReference type="Gene3D" id="1.20.200.20">
    <property type="entry name" value="She2 domain"/>
    <property type="match status" value="1"/>
</dbReference>
<dbReference type="InterPro" id="IPR024261">
    <property type="entry name" value="RNA-bd_She2"/>
</dbReference>
<dbReference type="InterPro" id="IPR036827">
    <property type="entry name" value="She2_dom_sf"/>
</dbReference>
<dbReference type="Pfam" id="PF11435">
    <property type="entry name" value="She2p"/>
    <property type="match status" value="1"/>
</dbReference>
<dbReference type="SUPFAM" id="SSF116942">
    <property type="entry name" value="RNA-binding protein She2p"/>
    <property type="match status" value="1"/>
</dbReference>
<accession>P36068</accession>
<accession>D6VX65</accession>
<organism>
    <name type="scientific">Saccharomyces cerevisiae (strain ATCC 204508 / S288c)</name>
    <name type="common">Baker's yeast</name>
    <dbReference type="NCBI Taxonomy" id="559292"/>
    <lineage>
        <taxon>Eukaryota</taxon>
        <taxon>Fungi</taxon>
        <taxon>Dikarya</taxon>
        <taxon>Ascomycota</taxon>
        <taxon>Saccharomycotina</taxon>
        <taxon>Saccharomycetes</taxon>
        <taxon>Saccharomycetales</taxon>
        <taxon>Saccharomycetaceae</taxon>
        <taxon>Saccharomyces</taxon>
    </lineage>
</organism>
<keyword id="KW-0002">3D-structure</keyword>
<keyword id="KW-0963">Cytoplasm</keyword>
<keyword id="KW-0509">mRNA transport</keyword>
<keyword id="KW-0539">Nucleus</keyword>
<keyword id="KW-1185">Reference proteome</keyword>
<keyword id="KW-0694">RNA-binding</keyword>
<keyword id="KW-0813">Transport</keyword>
<name>SHE2_YEAST</name>
<evidence type="ECO:0000269" key="1">
    <source>
    </source>
</evidence>
<evidence type="ECO:0000269" key="2">
    <source>
    </source>
</evidence>
<evidence type="ECO:0000269" key="3">
    <source>
    </source>
</evidence>
<evidence type="ECO:0000269" key="4">
    <source>
    </source>
</evidence>
<evidence type="ECO:0000269" key="5">
    <source>
    </source>
</evidence>
<evidence type="ECO:0000269" key="6">
    <source>
    </source>
</evidence>
<evidence type="ECO:0000269" key="7">
    <source>
    </source>
</evidence>
<evidence type="ECO:0000269" key="8">
    <source>
    </source>
</evidence>
<evidence type="ECO:0000269" key="9">
    <source>
    </source>
</evidence>
<evidence type="ECO:0000269" key="10">
    <source>
    </source>
</evidence>
<evidence type="ECO:0000269" key="11">
    <source>
    </source>
</evidence>
<evidence type="ECO:0000269" key="12">
    <source>
    </source>
</evidence>
<evidence type="ECO:0000269" key="13">
    <source>
    </source>
</evidence>
<evidence type="ECO:0000269" key="14">
    <source>
    </source>
</evidence>
<evidence type="ECO:0000269" key="15">
    <source>
    </source>
</evidence>
<evidence type="ECO:0000269" key="16">
    <source>
    </source>
</evidence>
<evidence type="ECO:0000269" key="17">
    <source>
    </source>
</evidence>
<evidence type="ECO:0000269" key="18">
    <source>
    </source>
</evidence>
<evidence type="ECO:0000269" key="19">
    <source>
    </source>
</evidence>
<evidence type="ECO:0000305" key="20"/>
<evidence type="ECO:0007829" key="21">
    <source>
        <dbReference type="PDB" id="1XLY"/>
    </source>
</evidence>
<evidence type="ECO:0007829" key="22">
    <source>
        <dbReference type="PDB" id="4WNL"/>
    </source>
</evidence>
<evidence type="ECO:0007829" key="23">
    <source>
        <dbReference type="PDB" id="5M0I"/>
    </source>
</evidence>
<evidence type="ECO:0007829" key="24">
    <source>
        <dbReference type="PDB" id="5M0J"/>
    </source>
</evidence>
<protein>
    <recommendedName>
        <fullName>SWI5-dependent HO expression protein 2</fullName>
    </recommendedName>
</protein>
<gene>
    <name type="primary">SHE2</name>
    <name type="ordered locus">YKL130C</name>
</gene>
<sequence length="246" mass="28251">MSKDKDIKVTPGTCELVEQILALLSRYLSSYIHVLNKFISHLRRVATLRFERTTLIKFVKKLRFYNDCVLSYNASEFINEGKNELDPEADSFDKVILPIASMFVKCVETFDLLNYYLTQSLQKEILSKTLNEDLTLTAESILAIDDTYNHFVKFSQWMIESLRIGSNLLDLEVVQFAIKCADEDGTNIGETDNIFLQEILPVNSEEEFQTLSAAWHSILDGKLSALDEEFDVVATKWHDKFGKLKN</sequence>